<evidence type="ECO:0000255" key="1">
    <source>
        <dbReference type="HAMAP-Rule" id="MF_03119"/>
    </source>
</evidence>
<reference key="1">
    <citation type="submission" date="2005-09" db="EMBL/GenBank/DDBJ databases">
        <title>Annotation of the Aspergillus terreus NIH2624 genome.</title>
        <authorList>
            <person name="Birren B.W."/>
            <person name="Lander E.S."/>
            <person name="Galagan J.E."/>
            <person name="Nusbaum C."/>
            <person name="Devon K."/>
            <person name="Henn M."/>
            <person name="Ma L.-J."/>
            <person name="Jaffe D.B."/>
            <person name="Butler J."/>
            <person name="Alvarez P."/>
            <person name="Gnerre S."/>
            <person name="Grabherr M."/>
            <person name="Kleber M."/>
            <person name="Mauceli E.W."/>
            <person name="Brockman W."/>
            <person name="Rounsley S."/>
            <person name="Young S.K."/>
            <person name="LaButti K."/>
            <person name="Pushparaj V."/>
            <person name="DeCaprio D."/>
            <person name="Crawford M."/>
            <person name="Koehrsen M."/>
            <person name="Engels R."/>
            <person name="Montgomery P."/>
            <person name="Pearson M."/>
            <person name="Howarth C."/>
            <person name="Larson L."/>
            <person name="Luoma S."/>
            <person name="White J."/>
            <person name="Alvarado L."/>
            <person name="Kodira C.D."/>
            <person name="Zeng Q."/>
            <person name="Oleary S."/>
            <person name="Yandava C."/>
            <person name="Denning D.W."/>
            <person name="Nierman W.C."/>
            <person name="Milne T."/>
            <person name="Madden K."/>
        </authorList>
    </citation>
    <scope>NUCLEOTIDE SEQUENCE [LARGE SCALE GENOMIC DNA]</scope>
    <source>
        <strain>NIH 2624 / FGSC A1156</strain>
    </source>
</reference>
<protein>
    <recommendedName>
        <fullName evidence="1">Methylthioribose-1-phosphate isomerase</fullName>
        <shortName evidence="1">M1Pi</shortName>
        <shortName evidence="1">MTR-1-P isomerase</shortName>
        <ecNumber evidence="1">5.3.1.23</ecNumber>
    </recommendedName>
    <alternativeName>
        <fullName evidence="1">S-methyl-5-thioribose-1-phosphate isomerase</fullName>
    </alternativeName>
    <alternativeName>
        <fullName evidence="1">Translation initiation factor eIF-2B subunit alpha/beta/delta-like protein</fullName>
    </alternativeName>
</protein>
<name>MTNA_ASPTN</name>
<comment type="function">
    <text evidence="1">Catalyzes the interconversion of methylthioribose-1-phosphate (MTR-1-P) into methylthioribulose-1-phosphate (MTRu-1-P).</text>
</comment>
<comment type="catalytic activity">
    <reaction evidence="1">
        <text>5-(methylsulfanyl)-alpha-D-ribose 1-phosphate = 5-(methylsulfanyl)-D-ribulose 1-phosphate</text>
        <dbReference type="Rhea" id="RHEA:19989"/>
        <dbReference type="ChEBI" id="CHEBI:58533"/>
        <dbReference type="ChEBI" id="CHEBI:58548"/>
        <dbReference type="EC" id="5.3.1.23"/>
    </reaction>
</comment>
<comment type="pathway">
    <text evidence="1">Amino-acid biosynthesis; L-methionine biosynthesis via salvage pathway; L-methionine from S-methyl-5-thio-alpha-D-ribose 1-phosphate: step 1/6.</text>
</comment>
<comment type="subcellular location">
    <subcellularLocation>
        <location evidence="1">Cytoplasm</location>
    </subcellularLocation>
    <subcellularLocation>
        <location evidence="1">Nucleus</location>
    </subcellularLocation>
</comment>
<comment type="similarity">
    <text evidence="1">Belongs to the eIF-2B alpha/beta/delta subunits family. MtnA subfamily.</text>
</comment>
<sequence length="377" mass="40070">MTLQAIKYNNGDLAIIDQLQLPHVEKYVTIHNSEEGWHAIKDMRVRGAPAIAIVAALALASELHGLMAHDKLSPEAEDVQTFVVEKLRYLVSSRPTAVNLSDAARKLEVVVAQSARAPGATGKTVATAFIQAAEEMLVKDVEDNKKIGEHGAQWILKNSLEGHGKATVLTHCNTGSLATSGYGTALGVIRSLASADSLQHAYCTETRPYNQGSRLTAFELVHDALPATLITDSMAAALLASKKAGVNAIVVGADRVAANGDTANKIGTYGLAVLAKYHNVKFLVAAPLTTIDLNTKSGDQIVIEERLASEVTSIRGPRDNTGSEDVELVTVCTAAKGINVWNPAFDVTPAALIDGIITEKGVMEKDSAGMFHLEELF</sequence>
<accession>Q0CFY3</accession>
<keyword id="KW-0028">Amino-acid biosynthesis</keyword>
<keyword id="KW-0963">Cytoplasm</keyword>
<keyword id="KW-0413">Isomerase</keyword>
<keyword id="KW-0486">Methionine biosynthesis</keyword>
<keyword id="KW-0539">Nucleus</keyword>
<keyword id="KW-1185">Reference proteome</keyword>
<gene>
    <name type="primary">mri1</name>
    <name type="ORF">ATEG_07401</name>
</gene>
<feature type="chain" id="PRO_0000402016" description="Methylthioribose-1-phosphate isomerase">
    <location>
        <begin position="1"/>
        <end position="377"/>
    </location>
</feature>
<feature type="active site" description="Proton donor" evidence="1">
    <location>
        <position position="254"/>
    </location>
</feature>
<feature type="site" description="Transition state stabilizer" evidence="1">
    <location>
        <position position="172"/>
    </location>
</feature>
<organism>
    <name type="scientific">Aspergillus terreus (strain NIH 2624 / FGSC A1156)</name>
    <dbReference type="NCBI Taxonomy" id="341663"/>
    <lineage>
        <taxon>Eukaryota</taxon>
        <taxon>Fungi</taxon>
        <taxon>Dikarya</taxon>
        <taxon>Ascomycota</taxon>
        <taxon>Pezizomycotina</taxon>
        <taxon>Eurotiomycetes</taxon>
        <taxon>Eurotiomycetidae</taxon>
        <taxon>Eurotiales</taxon>
        <taxon>Aspergillaceae</taxon>
        <taxon>Aspergillus</taxon>
        <taxon>Aspergillus subgen. Circumdati</taxon>
    </lineage>
</organism>
<dbReference type="EC" id="5.3.1.23" evidence="1"/>
<dbReference type="EMBL" id="CH476604">
    <property type="protein sequence ID" value="EAU31663.1"/>
    <property type="molecule type" value="Genomic_DNA"/>
</dbReference>
<dbReference type="RefSeq" id="XP_001216022.1">
    <property type="nucleotide sequence ID" value="XM_001216022.1"/>
</dbReference>
<dbReference type="SMR" id="Q0CFY3"/>
<dbReference type="STRING" id="341663.Q0CFY3"/>
<dbReference type="EnsemblFungi" id="EAU31663">
    <property type="protein sequence ID" value="EAU31663"/>
    <property type="gene ID" value="ATEG_07401"/>
</dbReference>
<dbReference type="GeneID" id="4322543"/>
<dbReference type="VEuPathDB" id="FungiDB:ATEG_07401"/>
<dbReference type="eggNOG" id="KOG1468">
    <property type="taxonomic scope" value="Eukaryota"/>
</dbReference>
<dbReference type="HOGENOM" id="CLU_016218_1_3_1"/>
<dbReference type="OMA" id="CETRPLN"/>
<dbReference type="OrthoDB" id="2461at2759"/>
<dbReference type="UniPathway" id="UPA00904">
    <property type="reaction ID" value="UER00874"/>
</dbReference>
<dbReference type="Proteomes" id="UP000007963">
    <property type="component" value="Unassembled WGS sequence"/>
</dbReference>
<dbReference type="GO" id="GO:0005737">
    <property type="term" value="C:cytoplasm"/>
    <property type="evidence" value="ECO:0007669"/>
    <property type="project" value="UniProtKB-SubCell"/>
</dbReference>
<dbReference type="GO" id="GO:0005634">
    <property type="term" value="C:nucleus"/>
    <property type="evidence" value="ECO:0007669"/>
    <property type="project" value="UniProtKB-SubCell"/>
</dbReference>
<dbReference type="GO" id="GO:0046523">
    <property type="term" value="F:S-methyl-5-thioribose-1-phosphate isomerase activity"/>
    <property type="evidence" value="ECO:0007669"/>
    <property type="project" value="UniProtKB-UniRule"/>
</dbReference>
<dbReference type="GO" id="GO:0019509">
    <property type="term" value="P:L-methionine salvage from methylthioadenosine"/>
    <property type="evidence" value="ECO:0007669"/>
    <property type="project" value="UniProtKB-UniRule"/>
</dbReference>
<dbReference type="FunFam" id="1.20.120.420:FF:000002">
    <property type="entry name" value="Methylthioribose-1-phosphate isomerase"/>
    <property type="match status" value="1"/>
</dbReference>
<dbReference type="FunFam" id="3.40.50.10470:FF:000010">
    <property type="entry name" value="Methylthioribose-1-phosphate isomerase"/>
    <property type="match status" value="1"/>
</dbReference>
<dbReference type="Gene3D" id="1.20.120.420">
    <property type="entry name" value="translation initiation factor eif-2b, domain 1"/>
    <property type="match status" value="1"/>
</dbReference>
<dbReference type="Gene3D" id="3.40.50.10470">
    <property type="entry name" value="Translation initiation factor eif-2b, domain 2"/>
    <property type="match status" value="1"/>
</dbReference>
<dbReference type="HAMAP" id="MF_01678">
    <property type="entry name" value="Salvage_MtnA"/>
    <property type="match status" value="1"/>
</dbReference>
<dbReference type="InterPro" id="IPR000649">
    <property type="entry name" value="IF-2B-related"/>
</dbReference>
<dbReference type="InterPro" id="IPR005251">
    <property type="entry name" value="IF-M1Pi"/>
</dbReference>
<dbReference type="InterPro" id="IPR042529">
    <property type="entry name" value="IF_2B-like_C"/>
</dbReference>
<dbReference type="InterPro" id="IPR011559">
    <property type="entry name" value="Initiation_fac_2B_a/b/d"/>
</dbReference>
<dbReference type="InterPro" id="IPR027363">
    <property type="entry name" value="M1Pi_N"/>
</dbReference>
<dbReference type="InterPro" id="IPR037171">
    <property type="entry name" value="NagB/RpiA_transferase-like"/>
</dbReference>
<dbReference type="NCBIfam" id="TIGR00524">
    <property type="entry name" value="eIF-2B_rel"/>
    <property type="match status" value="1"/>
</dbReference>
<dbReference type="NCBIfam" id="NF004326">
    <property type="entry name" value="PRK05720.1"/>
    <property type="match status" value="1"/>
</dbReference>
<dbReference type="NCBIfam" id="TIGR00512">
    <property type="entry name" value="salvage_mtnA"/>
    <property type="match status" value="1"/>
</dbReference>
<dbReference type="PANTHER" id="PTHR43475">
    <property type="entry name" value="METHYLTHIORIBOSE-1-PHOSPHATE ISOMERASE"/>
    <property type="match status" value="1"/>
</dbReference>
<dbReference type="PANTHER" id="PTHR43475:SF1">
    <property type="entry name" value="METHYLTHIORIBOSE-1-PHOSPHATE ISOMERASE"/>
    <property type="match status" value="1"/>
</dbReference>
<dbReference type="Pfam" id="PF01008">
    <property type="entry name" value="IF-2B"/>
    <property type="match status" value="1"/>
</dbReference>
<dbReference type="SUPFAM" id="SSF100950">
    <property type="entry name" value="NagB/RpiA/CoA transferase-like"/>
    <property type="match status" value="1"/>
</dbReference>
<proteinExistence type="inferred from homology"/>